<organism>
    <name type="scientific">Salmonella typhimurium (strain LT2 / SGSC1412 / ATCC 700720)</name>
    <dbReference type="NCBI Taxonomy" id="99287"/>
    <lineage>
        <taxon>Bacteria</taxon>
        <taxon>Pseudomonadati</taxon>
        <taxon>Pseudomonadota</taxon>
        <taxon>Gammaproteobacteria</taxon>
        <taxon>Enterobacterales</taxon>
        <taxon>Enterobacteriaceae</taxon>
        <taxon>Salmonella</taxon>
    </lineage>
</organism>
<comment type="function">
    <text evidence="1">Essential cell division protein that stabilizes the FtsZ protofilaments by cross-linking them and that serves as a cytoplasmic membrane anchor for the Z ring. Also required for the recruitment to the septal ring of downstream cell division proteins.</text>
</comment>
<comment type="subunit">
    <text evidence="1">Interacts with FtsZ via their C-terminal domains.</text>
</comment>
<comment type="subcellular location">
    <subcellularLocation>
        <location evidence="1">Cell inner membrane</location>
        <topology evidence="1">Single-pass type I membrane protein</topology>
    </subcellularLocation>
    <text evidence="1">Localizes to the Z ring in an FtsZ-dependent manner.</text>
</comment>
<comment type="similarity">
    <text evidence="1">Belongs to the ZipA family.</text>
</comment>
<proteinExistence type="inferred from homology"/>
<sequence length="328" mass="36318">MMQDLRLILIIVGAIAIIALLVHGFWTSRKERSSMFRDRPLKRMKSKRDDDSYDDDVEEDEGVGEVRVHRVNHAPGQSQEHDAPRQSPQHQYQPPYASAQPRPAAPPQPQAPMQQPVQQPVQPAPQPQQVQPSAPPVQPPQQQPAPPSQAPQPVAQPAPPPSAQTFQPAEPVVEAEPVVEEAPVVEKPQRKEAVIIMNVAAHHGSELNGEVLLNSIQQSGFKFGDMNIFHRHLSPDGSGPALFSLANMVNPGTFDPEMTDFTTPGVTIFMQVPSYGDALQNFKLMLQSAQHIADEVGGVVLDDQRRMMTPQKLREYQDRIREVMDANA</sequence>
<name>ZIPA_SALTY</name>
<accession>P0A2N6</accession>
<accession>P55894</accession>
<dbReference type="EMBL" id="AE006468">
    <property type="protein sequence ID" value="AAL21322.1"/>
    <property type="molecule type" value="Genomic_DNA"/>
</dbReference>
<dbReference type="EMBL" id="M21450">
    <property type="status" value="NOT_ANNOTATED_CDS"/>
    <property type="molecule type" value="Genomic_DNA"/>
</dbReference>
<dbReference type="RefSeq" id="NP_461363.1">
    <property type="nucleotide sequence ID" value="NC_003197.2"/>
</dbReference>
<dbReference type="RefSeq" id="WP_000983126.1">
    <property type="nucleotide sequence ID" value="NC_003197.2"/>
</dbReference>
<dbReference type="SMR" id="P0A2N6"/>
<dbReference type="STRING" id="99287.STM2428"/>
<dbReference type="PaxDb" id="99287-STM2428"/>
<dbReference type="GeneID" id="1253950"/>
<dbReference type="KEGG" id="stm:STM2428"/>
<dbReference type="PATRIC" id="fig|99287.12.peg.2565"/>
<dbReference type="HOGENOM" id="CLU_030174_1_0_6"/>
<dbReference type="PhylomeDB" id="P0A2N6"/>
<dbReference type="BioCyc" id="SENT99287:STM2428-MONOMER"/>
<dbReference type="Proteomes" id="UP000001014">
    <property type="component" value="Chromosome"/>
</dbReference>
<dbReference type="GO" id="GO:0032153">
    <property type="term" value="C:cell division site"/>
    <property type="evidence" value="ECO:0000318"/>
    <property type="project" value="GO_Central"/>
</dbReference>
<dbReference type="GO" id="GO:0005886">
    <property type="term" value="C:plasma membrane"/>
    <property type="evidence" value="ECO:0000318"/>
    <property type="project" value="GO_Central"/>
</dbReference>
<dbReference type="GO" id="GO:0000917">
    <property type="term" value="P:division septum assembly"/>
    <property type="evidence" value="ECO:0000318"/>
    <property type="project" value="GO_Central"/>
</dbReference>
<dbReference type="GO" id="GO:0043093">
    <property type="term" value="P:FtsZ-dependent cytokinesis"/>
    <property type="evidence" value="ECO:0007669"/>
    <property type="project" value="UniProtKB-UniRule"/>
</dbReference>
<dbReference type="CDD" id="cd00231">
    <property type="entry name" value="ZipA"/>
    <property type="match status" value="1"/>
</dbReference>
<dbReference type="FunFam" id="3.30.1400.10:FF:000001">
    <property type="entry name" value="Cell division protein ZipA"/>
    <property type="match status" value="1"/>
</dbReference>
<dbReference type="Gene3D" id="3.30.1400.10">
    <property type="entry name" value="ZipA, C-terminal FtsZ-binding domain"/>
    <property type="match status" value="1"/>
</dbReference>
<dbReference type="HAMAP" id="MF_00509">
    <property type="entry name" value="ZipA"/>
    <property type="match status" value="1"/>
</dbReference>
<dbReference type="InterPro" id="IPR011919">
    <property type="entry name" value="Cell_div_ZipA"/>
</dbReference>
<dbReference type="InterPro" id="IPR007449">
    <property type="entry name" value="ZipA_FtsZ-bd_C"/>
</dbReference>
<dbReference type="InterPro" id="IPR036765">
    <property type="entry name" value="ZipA_FtsZ-bd_C_sf"/>
</dbReference>
<dbReference type="NCBIfam" id="TIGR02205">
    <property type="entry name" value="septum_zipA"/>
    <property type="match status" value="1"/>
</dbReference>
<dbReference type="PANTHER" id="PTHR38685">
    <property type="entry name" value="CELL DIVISION PROTEIN ZIPA"/>
    <property type="match status" value="1"/>
</dbReference>
<dbReference type="PANTHER" id="PTHR38685:SF1">
    <property type="entry name" value="CELL DIVISION PROTEIN ZIPA"/>
    <property type="match status" value="1"/>
</dbReference>
<dbReference type="Pfam" id="PF04354">
    <property type="entry name" value="ZipA_C"/>
    <property type="match status" value="1"/>
</dbReference>
<dbReference type="SMART" id="SM00771">
    <property type="entry name" value="ZipA_C"/>
    <property type="match status" value="1"/>
</dbReference>
<dbReference type="SUPFAM" id="SSF64383">
    <property type="entry name" value="Cell-division protein ZipA, C-terminal domain"/>
    <property type="match status" value="1"/>
</dbReference>
<gene>
    <name evidence="1" type="primary">zipA</name>
    <name type="ordered locus">STM2428</name>
</gene>
<keyword id="KW-0131">Cell cycle</keyword>
<keyword id="KW-0132">Cell division</keyword>
<keyword id="KW-0997">Cell inner membrane</keyword>
<keyword id="KW-1003">Cell membrane</keyword>
<keyword id="KW-0472">Membrane</keyword>
<keyword id="KW-1185">Reference proteome</keyword>
<keyword id="KW-0812">Transmembrane</keyword>
<keyword id="KW-1133">Transmembrane helix</keyword>
<feature type="chain" id="PRO_0000214535" description="Cell division protein ZipA">
    <location>
        <begin position="1"/>
        <end position="328"/>
    </location>
</feature>
<feature type="topological domain" description="Periplasmic" evidence="1">
    <location>
        <begin position="1"/>
        <end position="6"/>
    </location>
</feature>
<feature type="transmembrane region" description="Helical" evidence="1">
    <location>
        <begin position="7"/>
        <end position="27"/>
    </location>
</feature>
<feature type="topological domain" description="Cytoplasmic" evidence="1">
    <location>
        <begin position="28"/>
        <end position="328"/>
    </location>
</feature>
<feature type="region of interest" description="Disordered" evidence="2">
    <location>
        <begin position="42"/>
        <end position="178"/>
    </location>
</feature>
<feature type="compositionally biased region" description="Acidic residues" evidence="2">
    <location>
        <begin position="51"/>
        <end position="63"/>
    </location>
</feature>
<feature type="compositionally biased region" description="Low complexity" evidence="2">
    <location>
        <begin position="85"/>
        <end position="102"/>
    </location>
</feature>
<feature type="compositionally biased region" description="Low complexity" evidence="2">
    <location>
        <begin position="111"/>
        <end position="132"/>
    </location>
</feature>
<feature type="compositionally biased region" description="Pro residues" evidence="2">
    <location>
        <begin position="133"/>
        <end position="162"/>
    </location>
</feature>
<feature type="compositionally biased region" description="Low complexity" evidence="2">
    <location>
        <begin position="168"/>
        <end position="178"/>
    </location>
</feature>
<protein>
    <recommendedName>
        <fullName evidence="1">Cell division protein ZipA</fullName>
    </recommendedName>
</protein>
<reference key="1">
    <citation type="journal article" date="2001" name="Nature">
        <title>Complete genome sequence of Salmonella enterica serovar Typhimurium LT2.</title>
        <authorList>
            <person name="McClelland M."/>
            <person name="Sanderson K.E."/>
            <person name="Spieth J."/>
            <person name="Clifton S.W."/>
            <person name="Latreille P."/>
            <person name="Courtney L."/>
            <person name="Porwollik S."/>
            <person name="Ali J."/>
            <person name="Dante M."/>
            <person name="Du F."/>
            <person name="Hou S."/>
            <person name="Layman D."/>
            <person name="Leonard S."/>
            <person name="Nguyen C."/>
            <person name="Scott K."/>
            <person name="Holmes A."/>
            <person name="Grewal N."/>
            <person name="Mulvaney E."/>
            <person name="Ryan E."/>
            <person name="Sun H."/>
            <person name="Florea L."/>
            <person name="Miller W."/>
            <person name="Stoneking T."/>
            <person name="Nhan M."/>
            <person name="Waterston R."/>
            <person name="Wilson R.K."/>
        </authorList>
    </citation>
    <scope>NUCLEOTIDE SEQUENCE [LARGE SCALE GENOMIC DNA]</scope>
    <source>
        <strain>LT2 / SGSC1412 / ATCC 700720</strain>
    </source>
</reference>
<reference key="2">
    <citation type="journal article" date="1988" name="J. Bacteriol.">
        <title>DNA sequences of the cysK regions of Salmonella typhimurium and Escherichia coli and linkage of the cysK regions to ptsH.</title>
        <authorList>
            <person name="Byrne C.R."/>
            <person name="Monroe R.S."/>
            <person name="Ward K.A."/>
            <person name="Kredich N.M."/>
        </authorList>
    </citation>
    <scope>NUCLEOTIDE SEQUENCE [GENOMIC DNA] OF 1-32</scope>
    <source>
        <strain>LT2</strain>
    </source>
</reference>
<evidence type="ECO:0000255" key="1">
    <source>
        <dbReference type="HAMAP-Rule" id="MF_00509"/>
    </source>
</evidence>
<evidence type="ECO:0000256" key="2">
    <source>
        <dbReference type="SAM" id="MobiDB-lite"/>
    </source>
</evidence>